<organism>
    <name type="scientific">Methanopyrus kandleri (strain AV19 / DSM 6324 / JCM 9639 / NBRC 100938)</name>
    <dbReference type="NCBI Taxonomy" id="190192"/>
    <lineage>
        <taxon>Archaea</taxon>
        <taxon>Methanobacteriati</taxon>
        <taxon>Methanobacteriota</taxon>
        <taxon>Methanomada group</taxon>
        <taxon>Methanopyri</taxon>
        <taxon>Methanopyrales</taxon>
        <taxon>Methanopyraceae</taxon>
        <taxon>Methanopyrus</taxon>
    </lineage>
</organism>
<name>DGGGP_METKA</name>
<sequence length="271" mass="28174">MRAYLELARPINCAMAALGVVVGELIAGARLDVGAVLAPVVAAVVCAGGNAINDYFDAEVDAVNRPDRPIPSGRVSPRSARMFALGCFAVGVGMATVINRMCLAIAALNSVLLYLYSWRLKGTPLIGNVMVSYLVGSCFLFGAAVGQRPAPAVWLFLLAFLANLVREILKDLEDVEGDAALGLKTLPIAYGEGVALRVATVFAIALAVLTPLPYLDGVVGWPYLVLALPAAAVILLASVLAVAGSWDAGKAQRVVKVGMLLGLLAFLASLL</sequence>
<proteinExistence type="inferred from homology"/>
<feature type="chain" id="PRO_0000350707" description="Digeranylgeranylglyceryl phosphate synthase">
    <location>
        <begin position="1"/>
        <end position="271"/>
    </location>
</feature>
<feature type="transmembrane region" description="Helical" evidence="1">
    <location>
        <begin position="11"/>
        <end position="31"/>
    </location>
</feature>
<feature type="transmembrane region" description="Helical" evidence="1">
    <location>
        <begin position="33"/>
        <end position="53"/>
    </location>
</feature>
<feature type="transmembrane region" description="Helical" evidence="1">
    <location>
        <begin position="88"/>
        <end position="108"/>
    </location>
</feature>
<feature type="transmembrane region" description="Helical" evidence="1">
    <location>
        <begin position="125"/>
        <end position="145"/>
    </location>
</feature>
<feature type="transmembrane region" description="Helical" evidence="1">
    <location>
        <begin position="149"/>
        <end position="169"/>
    </location>
</feature>
<feature type="transmembrane region" description="Helical" evidence="1">
    <location>
        <begin position="201"/>
        <end position="221"/>
    </location>
</feature>
<feature type="transmembrane region" description="Helical" evidence="1">
    <location>
        <begin position="224"/>
        <end position="244"/>
    </location>
</feature>
<feature type="transmembrane region" description="Helical" evidence="1">
    <location>
        <begin position="251"/>
        <end position="271"/>
    </location>
</feature>
<evidence type="ECO:0000255" key="1">
    <source>
        <dbReference type="HAMAP-Rule" id="MF_01286"/>
    </source>
</evidence>
<accession>Q8TWS9</accession>
<gene>
    <name type="ordered locus">MK0953</name>
</gene>
<keyword id="KW-1003">Cell membrane</keyword>
<keyword id="KW-0444">Lipid biosynthesis</keyword>
<keyword id="KW-0443">Lipid metabolism</keyword>
<keyword id="KW-0460">Magnesium</keyword>
<keyword id="KW-0472">Membrane</keyword>
<keyword id="KW-0594">Phospholipid biosynthesis</keyword>
<keyword id="KW-1208">Phospholipid metabolism</keyword>
<keyword id="KW-1185">Reference proteome</keyword>
<keyword id="KW-0808">Transferase</keyword>
<keyword id="KW-0812">Transmembrane</keyword>
<keyword id="KW-1133">Transmembrane helix</keyword>
<comment type="function">
    <text evidence="1">Prenyltransferase that catalyzes the transfer of the geranylgeranyl moiety of geranylgeranyl diphosphate (GGPP) to the C2 hydroxyl of (S)-3-O-geranylgeranylglyceryl phosphate (GGGP). This reaction is the second ether-bond-formation step in the biosynthesis of archaeal membrane lipids.</text>
</comment>
<comment type="catalytic activity">
    <reaction evidence="1">
        <text>sn-3-O-(geranylgeranyl)glycerol 1-phosphate + (2E,6E,10E)-geranylgeranyl diphosphate = 2,3-bis-O-(geranylgeranyl)-sn-glycerol 1-phosphate + diphosphate</text>
        <dbReference type="Rhea" id="RHEA:18109"/>
        <dbReference type="ChEBI" id="CHEBI:33019"/>
        <dbReference type="ChEBI" id="CHEBI:57677"/>
        <dbReference type="ChEBI" id="CHEBI:58756"/>
        <dbReference type="ChEBI" id="CHEBI:58837"/>
        <dbReference type="EC" id="2.5.1.42"/>
    </reaction>
</comment>
<comment type="cofactor">
    <cofactor evidence="1">
        <name>Mg(2+)</name>
        <dbReference type="ChEBI" id="CHEBI:18420"/>
    </cofactor>
</comment>
<comment type="pathway">
    <text evidence="1">Membrane lipid metabolism; glycerophospholipid metabolism.</text>
</comment>
<comment type="subcellular location">
    <subcellularLocation>
        <location evidence="1">Cell membrane</location>
        <topology evidence="1">Multi-pass membrane protein</topology>
    </subcellularLocation>
</comment>
<comment type="similarity">
    <text evidence="1">Belongs to the UbiA prenyltransferase family. DGGGP synthase subfamily.</text>
</comment>
<protein>
    <recommendedName>
        <fullName evidence="1">Digeranylgeranylglyceryl phosphate synthase</fullName>
        <shortName evidence="1">DGGGP synthase</shortName>
        <shortName evidence="1">DGGGPS</shortName>
        <ecNumber evidence="1">2.5.1.42</ecNumber>
    </recommendedName>
    <alternativeName>
        <fullName evidence="1">(S)-2,3-di-O-geranylgeranylglyceryl phosphate synthase</fullName>
    </alternativeName>
    <alternativeName>
        <fullName evidence="1">Geranylgeranylglycerol-phosphate geranylgeranyltransferase</fullName>
    </alternativeName>
</protein>
<reference key="1">
    <citation type="journal article" date="2002" name="Proc. Natl. Acad. Sci. U.S.A.">
        <title>The complete genome of hyperthermophile Methanopyrus kandleri AV19 and monophyly of archaeal methanogens.</title>
        <authorList>
            <person name="Slesarev A.I."/>
            <person name="Mezhevaya K.V."/>
            <person name="Makarova K.S."/>
            <person name="Polushin N.N."/>
            <person name="Shcherbinina O.V."/>
            <person name="Shakhova V.V."/>
            <person name="Belova G.I."/>
            <person name="Aravind L."/>
            <person name="Natale D.A."/>
            <person name="Rogozin I.B."/>
            <person name="Tatusov R.L."/>
            <person name="Wolf Y.I."/>
            <person name="Stetter K.O."/>
            <person name="Malykh A.G."/>
            <person name="Koonin E.V."/>
            <person name="Kozyavkin S.A."/>
        </authorList>
    </citation>
    <scope>NUCLEOTIDE SEQUENCE [LARGE SCALE GENOMIC DNA]</scope>
    <source>
        <strain>AV19 / DSM 6324 / JCM 9639 / NBRC 100938</strain>
    </source>
</reference>
<dbReference type="EC" id="2.5.1.42" evidence="1"/>
<dbReference type="EMBL" id="AE009439">
    <property type="protein sequence ID" value="AAM02166.1"/>
    <property type="molecule type" value="Genomic_DNA"/>
</dbReference>
<dbReference type="RefSeq" id="WP_011019321.1">
    <property type="nucleotide sequence ID" value="NC_003551.1"/>
</dbReference>
<dbReference type="SMR" id="Q8TWS9"/>
<dbReference type="FunCoup" id="Q8TWS9">
    <property type="interactions" value="82"/>
</dbReference>
<dbReference type="STRING" id="190192.MK0953"/>
<dbReference type="PaxDb" id="190192-MK0953"/>
<dbReference type="EnsemblBacteria" id="AAM02166">
    <property type="protein sequence ID" value="AAM02166"/>
    <property type="gene ID" value="MK0953"/>
</dbReference>
<dbReference type="GeneID" id="1477054"/>
<dbReference type="KEGG" id="mka:MK0953"/>
<dbReference type="PATRIC" id="fig|190192.8.peg.998"/>
<dbReference type="HOGENOM" id="CLU_073311_1_1_2"/>
<dbReference type="InParanoid" id="Q8TWS9"/>
<dbReference type="OrthoDB" id="11851at2157"/>
<dbReference type="UniPathway" id="UPA00940"/>
<dbReference type="Proteomes" id="UP000001826">
    <property type="component" value="Chromosome"/>
</dbReference>
<dbReference type="GO" id="GO:0005886">
    <property type="term" value="C:plasma membrane"/>
    <property type="evidence" value="ECO:0007669"/>
    <property type="project" value="UniProtKB-SubCell"/>
</dbReference>
<dbReference type="GO" id="GO:0047295">
    <property type="term" value="F:geranylgeranylglycerol-phosphate geranylgeranyltransferase activity"/>
    <property type="evidence" value="ECO:0007669"/>
    <property type="project" value="UniProtKB-UniRule"/>
</dbReference>
<dbReference type="GO" id="GO:0000287">
    <property type="term" value="F:magnesium ion binding"/>
    <property type="evidence" value="ECO:0007669"/>
    <property type="project" value="UniProtKB-UniRule"/>
</dbReference>
<dbReference type="GO" id="GO:0046474">
    <property type="term" value="P:glycerophospholipid biosynthetic process"/>
    <property type="evidence" value="ECO:0007669"/>
    <property type="project" value="UniProtKB-UniRule"/>
</dbReference>
<dbReference type="CDD" id="cd13961">
    <property type="entry name" value="PT_UbiA_DGGGPS"/>
    <property type="match status" value="1"/>
</dbReference>
<dbReference type="Gene3D" id="1.10.357.140">
    <property type="entry name" value="UbiA prenyltransferase"/>
    <property type="match status" value="1"/>
</dbReference>
<dbReference type="Gene3D" id="1.20.120.1780">
    <property type="entry name" value="UbiA prenyltransferase"/>
    <property type="match status" value="1"/>
</dbReference>
<dbReference type="HAMAP" id="MF_01286">
    <property type="entry name" value="DGGGP_synth"/>
    <property type="match status" value="1"/>
</dbReference>
<dbReference type="InterPro" id="IPR023547">
    <property type="entry name" value="DGGGP_synth"/>
</dbReference>
<dbReference type="InterPro" id="IPR050475">
    <property type="entry name" value="Prenyltransferase_related"/>
</dbReference>
<dbReference type="InterPro" id="IPR000537">
    <property type="entry name" value="UbiA_prenyltransferase"/>
</dbReference>
<dbReference type="InterPro" id="IPR044878">
    <property type="entry name" value="UbiA_sf"/>
</dbReference>
<dbReference type="NCBIfam" id="NF009521">
    <property type="entry name" value="PRK12882.1"/>
    <property type="match status" value="1"/>
</dbReference>
<dbReference type="PANTHER" id="PTHR42723">
    <property type="entry name" value="CHLOROPHYLL SYNTHASE"/>
    <property type="match status" value="1"/>
</dbReference>
<dbReference type="PANTHER" id="PTHR42723:SF1">
    <property type="entry name" value="CHLOROPHYLL SYNTHASE, CHLOROPLASTIC"/>
    <property type="match status" value="1"/>
</dbReference>
<dbReference type="Pfam" id="PF01040">
    <property type="entry name" value="UbiA"/>
    <property type="match status" value="1"/>
</dbReference>